<feature type="chain" id="PRO_1000068548" description="Probable chemoreceptor glutamine deamidase CheD">
    <location>
        <begin position="1"/>
        <end position="246"/>
    </location>
</feature>
<feature type="region of interest" description="Disordered" evidence="2">
    <location>
        <begin position="225"/>
        <end position="246"/>
    </location>
</feature>
<organism>
    <name type="scientific">Burkholderia vietnamiensis (strain G4 / LMG 22486)</name>
    <name type="common">Burkholderia cepacia (strain R1808)</name>
    <dbReference type="NCBI Taxonomy" id="269482"/>
    <lineage>
        <taxon>Bacteria</taxon>
        <taxon>Pseudomonadati</taxon>
        <taxon>Pseudomonadota</taxon>
        <taxon>Betaproteobacteria</taxon>
        <taxon>Burkholderiales</taxon>
        <taxon>Burkholderiaceae</taxon>
        <taxon>Burkholderia</taxon>
        <taxon>Burkholderia cepacia complex</taxon>
    </lineage>
</organism>
<accession>A4JAD2</accession>
<name>CHED_BURVG</name>
<reference key="1">
    <citation type="submission" date="2007-03" db="EMBL/GenBank/DDBJ databases">
        <title>Complete sequence of chromosome 1 of Burkholderia vietnamiensis G4.</title>
        <authorList>
            <consortium name="US DOE Joint Genome Institute"/>
            <person name="Copeland A."/>
            <person name="Lucas S."/>
            <person name="Lapidus A."/>
            <person name="Barry K."/>
            <person name="Detter J.C."/>
            <person name="Glavina del Rio T."/>
            <person name="Hammon N."/>
            <person name="Israni S."/>
            <person name="Dalin E."/>
            <person name="Tice H."/>
            <person name="Pitluck S."/>
            <person name="Chain P."/>
            <person name="Malfatti S."/>
            <person name="Shin M."/>
            <person name="Vergez L."/>
            <person name="Schmutz J."/>
            <person name="Larimer F."/>
            <person name="Land M."/>
            <person name="Hauser L."/>
            <person name="Kyrpides N."/>
            <person name="Tiedje J."/>
            <person name="Richardson P."/>
        </authorList>
    </citation>
    <scope>NUCLEOTIDE SEQUENCE [LARGE SCALE GENOMIC DNA]</scope>
    <source>
        <strain>G4 / LMG 22486</strain>
    </source>
</reference>
<proteinExistence type="inferred from homology"/>
<sequence>MSALPIATNHYFDTHFDRPGVKLLPNEFYTTSEDIVLMTVLGSCVAACLHDPVSGIGGMNHFMLPDDGADAGAAASESMRYGAYAMEVLINELIKAGGRRERFEAKVFGGAAVLAGMTTINIGDRNADFVRRYLALERIRITAEDLQGVHPRKVAFMPRTGRAMVKKLRLQVPGVAEREAALAREAVRASAARARAKVELFAAPRPSAPPPARPRIELFGARSGGAGVQPAVQKAASPYAANLSRK</sequence>
<evidence type="ECO:0000255" key="1">
    <source>
        <dbReference type="HAMAP-Rule" id="MF_01440"/>
    </source>
</evidence>
<evidence type="ECO:0000256" key="2">
    <source>
        <dbReference type="SAM" id="MobiDB-lite"/>
    </source>
</evidence>
<comment type="function">
    <text evidence="1">Probably deamidates glutamine residues to glutamate on methyl-accepting chemotaxis receptors (MCPs), playing an important role in chemotaxis.</text>
</comment>
<comment type="catalytic activity">
    <reaction evidence="1">
        <text>L-glutaminyl-[protein] + H2O = L-glutamyl-[protein] + NH4(+)</text>
        <dbReference type="Rhea" id="RHEA:16441"/>
        <dbReference type="Rhea" id="RHEA-COMP:10207"/>
        <dbReference type="Rhea" id="RHEA-COMP:10208"/>
        <dbReference type="ChEBI" id="CHEBI:15377"/>
        <dbReference type="ChEBI" id="CHEBI:28938"/>
        <dbReference type="ChEBI" id="CHEBI:29973"/>
        <dbReference type="ChEBI" id="CHEBI:30011"/>
        <dbReference type="EC" id="3.5.1.44"/>
    </reaction>
</comment>
<comment type="similarity">
    <text evidence="1">Belongs to the CheD family.</text>
</comment>
<protein>
    <recommendedName>
        <fullName evidence="1">Probable chemoreceptor glutamine deamidase CheD</fullName>
        <ecNumber evidence="1">3.5.1.44</ecNumber>
    </recommendedName>
</protein>
<gene>
    <name evidence="1" type="primary">cheD</name>
    <name type="ordered locus">Bcep1808_0219</name>
</gene>
<dbReference type="EC" id="3.5.1.44" evidence="1"/>
<dbReference type="EMBL" id="CP000614">
    <property type="protein sequence ID" value="ABO53235.1"/>
    <property type="molecule type" value="Genomic_DNA"/>
</dbReference>
<dbReference type="SMR" id="A4JAD2"/>
<dbReference type="KEGG" id="bvi:Bcep1808_0219"/>
<dbReference type="eggNOG" id="COG1871">
    <property type="taxonomic scope" value="Bacteria"/>
</dbReference>
<dbReference type="HOGENOM" id="CLU_087854_0_0_4"/>
<dbReference type="Proteomes" id="UP000002287">
    <property type="component" value="Chromosome 1"/>
</dbReference>
<dbReference type="GO" id="GO:0050568">
    <property type="term" value="F:protein-glutamine glutaminase activity"/>
    <property type="evidence" value="ECO:0007669"/>
    <property type="project" value="UniProtKB-UniRule"/>
</dbReference>
<dbReference type="GO" id="GO:0006935">
    <property type="term" value="P:chemotaxis"/>
    <property type="evidence" value="ECO:0007669"/>
    <property type="project" value="UniProtKB-UniRule"/>
</dbReference>
<dbReference type="CDD" id="cd16352">
    <property type="entry name" value="CheD"/>
    <property type="match status" value="1"/>
</dbReference>
<dbReference type="Gene3D" id="3.30.1330.200">
    <property type="match status" value="1"/>
</dbReference>
<dbReference type="HAMAP" id="MF_01440">
    <property type="entry name" value="CheD"/>
    <property type="match status" value="1"/>
</dbReference>
<dbReference type="InterPro" id="IPR038592">
    <property type="entry name" value="CheD-like_sf"/>
</dbReference>
<dbReference type="InterPro" id="IPR005659">
    <property type="entry name" value="Chemorcpt_Glu_NH3ase_CheD"/>
</dbReference>
<dbReference type="InterPro" id="IPR011324">
    <property type="entry name" value="Cytotoxic_necrot_fac-like_cat"/>
</dbReference>
<dbReference type="NCBIfam" id="NF010013">
    <property type="entry name" value="PRK13487.1"/>
    <property type="match status" value="1"/>
</dbReference>
<dbReference type="NCBIfam" id="NF010014">
    <property type="entry name" value="PRK13489.1"/>
    <property type="match status" value="1"/>
</dbReference>
<dbReference type="PANTHER" id="PTHR35147">
    <property type="entry name" value="CHEMORECEPTOR GLUTAMINE DEAMIDASE CHED-RELATED"/>
    <property type="match status" value="1"/>
</dbReference>
<dbReference type="PANTHER" id="PTHR35147:SF2">
    <property type="entry name" value="CHEMORECEPTOR GLUTAMINE DEAMIDASE CHED-RELATED"/>
    <property type="match status" value="1"/>
</dbReference>
<dbReference type="Pfam" id="PF03975">
    <property type="entry name" value="CheD"/>
    <property type="match status" value="1"/>
</dbReference>
<dbReference type="SUPFAM" id="SSF64438">
    <property type="entry name" value="CNF1/YfiH-like putative cysteine hydrolases"/>
    <property type="match status" value="1"/>
</dbReference>
<keyword id="KW-0145">Chemotaxis</keyword>
<keyword id="KW-0378">Hydrolase</keyword>